<accession>A5F827</accession>
<accession>C3M0Q6</accession>
<keyword id="KW-0143">Chaperone</keyword>
<keyword id="KW-0963">Cytoplasm</keyword>
<keyword id="KW-0694">RNA-binding</keyword>
<organism>
    <name type="scientific">Vibrio cholerae serotype O1 (strain ATCC 39541 / Classical Ogawa 395 / O395)</name>
    <dbReference type="NCBI Taxonomy" id="345073"/>
    <lineage>
        <taxon>Bacteria</taxon>
        <taxon>Pseudomonadati</taxon>
        <taxon>Pseudomonadota</taxon>
        <taxon>Gammaproteobacteria</taxon>
        <taxon>Vibrionales</taxon>
        <taxon>Vibrionaceae</taxon>
        <taxon>Vibrio</taxon>
    </lineage>
</organism>
<proteinExistence type="inferred from homology"/>
<feature type="chain" id="PRO_1000072823" description="RNA chaperone ProQ">
    <location>
        <begin position="1"/>
        <end position="208"/>
    </location>
</feature>
<feature type="region of interest" description="Disordered" evidence="2">
    <location>
        <begin position="107"/>
        <end position="152"/>
    </location>
</feature>
<feature type="compositionally biased region" description="Basic and acidic residues" evidence="2">
    <location>
        <begin position="107"/>
        <end position="127"/>
    </location>
</feature>
<feature type="compositionally biased region" description="Basic residues" evidence="2">
    <location>
        <begin position="128"/>
        <end position="137"/>
    </location>
</feature>
<comment type="function">
    <text evidence="1">RNA chaperone with significant RNA binding, RNA strand exchange and RNA duplexing activities.</text>
</comment>
<comment type="subcellular location">
    <subcellularLocation>
        <location evidence="1">Cytoplasm</location>
    </subcellularLocation>
</comment>
<comment type="similarity">
    <text evidence="1">Belongs to the ProQ family.</text>
</comment>
<sequence>MENTEKLKNSKEVIAYIAECFPNCFTLEGEAKPLKIGIFQDLADRLNDDPKVSKTQLRAALRQYTSSWRYLHGVKPGATRVDLDGNPCGELEEQHVEHAQAALAESKARVEARRKEQVKKVREEAKANKPKAKKPQQARRPQNAPKVEKKPVETRALAASELNVGNQVNVNMGKGNMAATIVEVNKEDVRVQLANGLQMVVKAEHLRA</sequence>
<evidence type="ECO:0000255" key="1">
    <source>
        <dbReference type="HAMAP-Rule" id="MF_00749"/>
    </source>
</evidence>
<evidence type="ECO:0000256" key="2">
    <source>
        <dbReference type="SAM" id="MobiDB-lite"/>
    </source>
</evidence>
<protein>
    <recommendedName>
        <fullName evidence="1">RNA chaperone ProQ</fullName>
    </recommendedName>
</protein>
<gene>
    <name evidence="1" type="primary">proQ</name>
    <name type="ordered locus">VC0395_A1105</name>
    <name type="ordered locus">VC395_1617</name>
</gene>
<dbReference type="EMBL" id="CP000627">
    <property type="protein sequence ID" value="ABQ21303.1"/>
    <property type="molecule type" value="Genomic_DNA"/>
</dbReference>
<dbReference type="EMBL" id="CP001235">
    <property type="protein sequence ID" value="ACP09622.1"/>
    <property type="molecule type" value="Genomic_DNA"/>
</dbReference>
<dbReference type="RefSeq" id="WP_000432038.1">
    <property type="nucleotide sequence ID" value="NZ_JAACZH010000009.1"/>
</dbReference>
<dbReference type="SMR" id="A5F827"/>
<dbReference type="GeneID" id="88783642"/>
<dbReference type="KEGG" id="vco:VC0395_A1105"/>
<dbReference type="KEGG" id="vcr:VC395_1617"/>
<dbReference type="PATRIC" id="fig|345073.21.peg.1563"/>
<dbReference type="eggNOG" id="COG3109">
    <property type="taxonomic scope" value="Bacteria"/>
</dbReference>
<dbReference type="HOGENOM" id="CLU_113254_0_0_6"/>
<dbReference type="OrthoDB" id="8421419at2"/>
<dbReference type="Proteomes" id="UP000000249">
    <property type="component" value="Chromosome 2"/>
</dbReference>
<dbReference type="GO" id="GO:0005829">
    <property type="term" value="C:cytosol"/>
    <property type="evidence" value="ECO:0007669"/>
    <property type="project" value="TreeGrafter"/>
</dbReference>
<dbReference type="GO" id="GO:0033592">
    <property type="term" value="F:RNA strand annealing activity"/>
    <property type="evidence" value="ECO:0007669"/>
    <property type="project" value="UniProtKB-UniRule"/>
</dbReference>
<dbReference type="GO" id="GO:0034057">
    <property type="term" value="F:RNA strand-exchange activity"/>
    <property type="evidence" value="ECO:0007669"/>
    <property type="project" value="UniProtKB-UniRule"/>
</dbReference>
<dbReference type="GO" id="GO:0010608">
    <property type="term" value="P:post-transcriptional regulation of gene expression"/>
    <property type="evidence" value="ECO:0007669"/>
    <property type="project" value="InterPro"/>
</dbReference>
<dbReference type="FunFam" id="1.10.1710.10:FF:000001">
    <property type="entry name" value="RNA chaperone ProQ"/>
    <property type="match status" value="1"/>
</dbReference>
<dbReference type="Gene3D" id="1.10.1710.10">
    <property type="entry name" value="ProQ/FinO domain"/>
    <property type="match status" value="1"/>
</dbReference>
<dbReference type="HAMAP" id="MF_00749">
    <property type="entry name" value="ProQ"/>
    <property type="match status" value="1"/>
</dbReference>
<dbReference type="InterPro" id="IPR023529">
    <property type="entry name" value="ProQ"/>
</dbReference>
<dbReference type="InterPro" id="IPR016103">
    <property type="entry name" value="ProQ/FinO"/>
</dbReference>
<dbReference type="InterPro" id="IPR036442">
    <property type="entry name" value="ProQ/FinO_sf"/>
</dbReference>
<dbReference type="InterPro" id="IPR035236">
    <property type="entry name" value="ProQ_C"/>
</dbReference>
<dbReference type="NCBIfam" id="NF003434">
    <property type="entry name" value="PRK04950.1"/>
    <property type="match status" value="1"/>
</dbReference>
<dbReference type="PANTHER" id="PTHR38106">
    <property type="entry name" value="RNA CHAPERONE PROQ"/>
    <property type="match status" value="1"/>
</dbReference>
<dbReference type="PANTHER" id="PTHR38106:SF1">
    <property type="entry name" value="RNA CHAPERONE PROQ"/>
    <property type="match status" value="1"/>
</dbReference>
<dbReference type="Pfam" id="PF04352">
    <property type="entry name" value="ProQ"/>
    <property type="match status" value="1"/>
</dbReference>
<dbReference type="Pfam" id="PF17516">
    <property type="entry name" value="ProQ_C"/>
    <property type="match status" value="1"/>
</dbReference>
<dbReference type="SMART" id="SM00945">
    <property type="entry name" value="ProQ"/>
    <property type="match status" value="1"/>
</dbReference>
<dbReference type="SUPFAM" id="SSF48657">
    <property type="entry name" value="FinO-like"/>
    <property type="match status" value="1"/>
</dbReference>
<reference key="1">
    <citation type="submission" date="2007-03" db="EMBL/GenBank/DDBJ databases">
        <authorList>
            <person name="Heidelberg J."/>
        </authorList>
    </citation>
    <scope>NUCLEOTIDE SEQUENCE [LARGE SCALE GENOMIC DNA]</scope>
    <source>
        <strain>ATCC 39541 / Classical Ogawa 395 / O395</strain>
    </source>
</reference>
<reference key="2">
    <citation type="journal article" date="2008" name="PLoS ONE">
        <title>A recalibrated molecular clock and independent origins for the cholera pandemic clones.</title>
        <authorList>
            <person name="Feng L."/>
            <person name="Reeves P.R."/>
            <person name="Lan R."/>
            <person name="Ren Y."/>
            <person name="Gao C."/>
            <person name="Zhou Z."/>
            <person name="Ren Y."/>
            <person name="Cheng J."/>
            <person name="Wang W."/>
            <person name="Wang J."/>
            <person name="Qian W."/>
            <person name="Li D."/>
            <person name="Wang L."/>
        </authorList>
    </citation>
    <scope>NUCLEOTIDE SEQUENCE [LARGE SCALE GENOMIC DNA]</scope>
    <source>
        <strain>ATCC 39541 / Classical Ogawa 395 / O395</strain>
    </source>
</reference>
<name>PROQ_VIBC3</name>